<comment type="function">
    <text evidence="1">Catalyzes the phosphorylation of the position 2 hydroxy group of 4-diphosphocytidyl-2C-methyl-D-erythritol.</text>
</comment>
<comment type="catalytic activity">
    <reaction evidence="1">
        <text>4-CDP-2-C-methyl-D-erythritol + ATP = 4-CDP-2-C-methyl-D-erythritol 2-phosphate + ADP + H(+)</text>
        <dbReference type="Rhea" id="RHEA:18437"/>
        <dbReference type="ChEBI" id="CHEBI:15378"/>
        <dbReference type="ChEBI" id="CHEBI:30616"/>
        <dbReference type="ChEBI" id="CHEBI:57823"/>
        <dbReference type="ChEBI" id="CHEBI:57919"/>
        <dbReference type="ChEBI" id="CHEBI:456216"/>
        <dbReference type="EC" id="2.7.1.148"/>
    </reaction>
</comment>
<comment type="pathway">
    <text evidence="1">Isoprenoid biosynthesis; isopentenyl diphosphate biosynthesis via DXP pathway; isopentenyl diphosphate from 1-deoxy-D-xylulose 5-phosphate: step 3/6.</text>
</comment>
<comment type="similarity">
    <text evidence="1">Belongs to the GHMP kinase family. IspE subfamily.</text>
</comment>
<sequence length="288" mass="31885">MHFLSPAKLNLFLQILGRREDDFHEIVTRYQAIAFGDQLSLSISSRDSLQVINACHLETPSNSIWKSVALFRRYTGITTPVSWRVVKQIPVGAGLAGGSSNAATALFALNQIFKTGLSDEEMRSLAEQIGMDTPFFFSTGAALGVARGEKIIALEESVSDRYVLYFSSEGVLTSRAFAVVQPSDCSSRKNLEYTQNDLEKPVFRLRLDLKEKKHWLESLWAELPVHIGLTGSGATLFVRYPEILEEDPSYAAQIQRAVTLSGGLLTSPIRRDPTAWYSIYSESALAAT</sequence>
<accession>B0B931</accession>
<name>ISPE_CHLT2</name>
<dbReference type="EC" id="2.7.1.148" evidence="1"/>
<dbReference type="EMBL" id="AM884176">
    <property type="protein sequence ID" value="CAP03618.1"/>
    <property type="molecule type" value="Genomic_DNA"/>
</dbReference>
<dbReference type="RefSeq" id="WP_009873415.1">
    <property type="nucleotide sequence ID" value="NC_010287.1"/>
</dbReference>
<dbReference type="RefSeq" id="YP_001654264.1">
    <property type="nucleotide sequence ID" value="NC_010287.1"/>
</dbReference>
<dbReference type="SMR" id="B0B931"/>
<dbReference type="KEGG" id="ctb:CTL0173"/>
<dbReference type="PATRIC" id="fig|471472.4.peg.187"/>
<dbReference type="HOGENOM" id="CLU_053057_3_0_0"/>
<dbReference type="UniPathway" id="UPA00056">
    <property type="reaction ID" value="UER00094"/>
</dbReference>
<dbReference type="Proteomes" id="UP001154402">
    <property type="component" value="Chromosome"/>
</dbReference>
<dbReference type="GO" id="GO:0050515">
    <property type="term" value="F:4-(cytidine 5'-diphospho)-2-C-methyl-D-erythritol kinase activity"/>
    <property type="evidence" value="ECO:0007669"/>
    <property type="project" value="UniProtKB-UniRule"/>
</dbReference>
<dbReference type="GO" id="GO:0005524">
    <property type="term" value="F:ATP binding"/>
    <property type="evidence" value="ECO:0007669"/>
    <property type="project" value="UniProtKB-UniRule"/>
</dbReference>
<dbReference type="GO" id="GO:0019288">
    <property type="term" value="P:isopentenyl diphosphate biosynthetic process, methylerythritol 4-phosphate pathway"/>
    <property type="evidence" value="ECO:0007669"/>
    <property type="project" value="UniProtKB-UniRule"/>
</dbReference>
<dbReference type="GO" id="GO:0016114">
    <property type="term" value="P:terpenoid biosynthetic process"/>
    <property type="evidence" value="ECO:0007669"/>
    <property type="project" value="InterPro"/>
</dbReference>
<dbReference type="Gene3D" id="3.30.230.10">
    <property type="match status" value="1"/>
</dbReference>
<dbReference type="Gene3D" id="3.30.70.890">
    <property type="entry name" value="GHMP kinase, C-terminal domain"/>
    <property type="match status" value="1"/>
</dbReference>
<dbReference type="HAMAP" id="MF_00061">
    <property type="entry name" value="IspE"/>
    <property type="match status" value="1"/>
</dbReference>
<dbReference type="InterPro" id="IPR036554">
    <property type="entry name" value="GHMP_kinase_C_sf"/>
</dbReference>
<dbReference type="InterPro" id="IPR006204">
    <property type="entry name" value="GHMP_kinase_N_dom"/>
</dbReference>
<dbReference type="InterPro" id="IPR004424">
    <property type="entry name" value="IspE"/>
</dbReference>
<dbReference type="InterPro" id="IPR020568">
    <property type="entry name" value="Ribosomal_Su5_D2-typ_SF"/>
</dbReference>
<dbReference type="InterPro" id="IPR014721">
    <property type="entry name" value="Ribsml_uS5_D2-typ_fold_subgr"/>
</dbReference>
<dbReference type="NCBIfam" id="TIGR00154">
    <property type="entry name" value="ispE"/>
    <property type="match status" value="1"/>
</dbReference>
<dbReference type="PANTHER" id="PTHR43527">
    <property type="entry name" value="4-DIPHOSPHOCYTIDYL-2-C-METHYL-D-ERYTHRITOL KINASE, CHLOROPLASTIC"/>
    <property type="match status" value="1"/>
</dbReference>
<dbReference type="PANTHER" id="PTHR43527:SF2">
    <property type="entry name" value="4-DIPHOSPHOCYTIDYL-2-C-METHYL-D-ERYTHRITOL KINASE, CHLOROPLASTIC"/>
    <property type="match status" value="1"/>
</dbReference>
<dbReference type="Pfam" id="PF00288">
    <property type="entry name" value="GHMP_kinases_N"/>
    <property type="match status" value="1"/>
</dbReference>
<dbReference type="PIRSF" id="PIRSF010376">
    <property type="entry name" value="IspE"/>
    <property type="match status" value="1"/>
</dbReference>
<dbReference type="SUPFAM" id="SSF55060">
    <property type="entry name" value="GHMP Kinase, C-terminal domain"/>
    <property type="match status" value="1"/>
</dbReference>
<dbReference type="SUPFAM" id="SSF54211">
    <property type="entry name" value="Ribosomal protein S5 domain 2-like"/>
    <property type="match status" value="1"/>
</dbReference>
<reference key="1">
    <citation type="journal article" date="2008" name="Genome Res.">
        <title>Chlamydia trachomatis: genome sequence analysis of lymphogranuloma venereum isolates.</title>
        <authorList>
            <person name="Thomson N.R."/>
            <person name="Holden M.T.G."/>
            <person name="Carder C."/>
            <person name="Lennard N."/>
            <person name="Lockey S.J."/>
            <person name="Marsh P."/>
            <person name="Skipp P."/>
            <person name="O'Connor C.D."/>
            <person name="Goodhead I."/>
            <person name="Norbertzcak H."/>
            <person name="Harris B."/>
            <person name="Ormond D."/>
            <person name="Rance R."/>
            <person name="Quail M.A."/>
            <person name="Parkhill J."/>
            <person name="Stephens R.S."/>
            <person name="Clarke I.N."/>
        </authorList>
    </citation>
    <scope>NUCLEOTIDE SEQUENCE [LARGE SCALE GENOMIC DNA]</scope>
    <source>
        <strain>ATCC VR-902B / DSM 19102 / 434/Bu</strain>
    </source>
</reference>
<protein>
    <recommendedName>
        <fullName evidence="1">4-diphosphocytidyl-2-C-methyl-D-erythritol kinase</fullName>
        <shortName evidence="1">CMK</shortName>
        <ecNumber evidence="1">2.7.1.148</ecNumber>
    </recommendedName>
    <alternativeName>
        <fullName evidence="1">4-(cytidine-5'-diphospho)-2-C-methyl-D-erythritol kinase</fullName>
    </alternativeName>
</protein>
<proteinExistence type="inferred from homology"/>
<organism>
    <name type="scientific">Chlamydia trachomatis serovar L2 (strain ATCC VR-902B / DSM 19102 / 434/Bu)</name>
    <dbReference type="NCBI Taxonomy" id="471472"/>
    <lineage>
        <taxon>Bacteria</taxon>
        <taxon>Pseudomonadati</taxon>
        <taxon>Chlamydiota</taxon>
        <taxon>Chlamydiia</taxon>
        <taxon>Chlamydiales</taxon>
        <taxon>Chlamydiaceae</taxon>
        <taxon>Chlamydia/Chlamydophila group</taxon>
        <taxon>Chlamydia</taxon>
    </lineage>
</organism>
<feature type="chain" id="PRO_1000092073" description="4-diphosphocytidyl-2-C-methyl-D-erythritol kinase">
    <location>
        <begin position="1"/>
        <end position="288"/>
    </location>
</feature>
<feature type="active site" evidence="1">
    <location>
        <position position="8"/>
    </location>
</feature>
<feature type="active site" evidence="1">
    <location>
        <position position="132"/>
    </location>
</feature>
<feature type="binding site" evidence="1">
    <location>
        <begin position="90"/>
        <end position="100"/>
    </location>
    <ligand>
        <name>ATP</name>
        <dbReference type="ChEBI" id="CHEBI:30616"/>
    </ligand>
</feature>
<evidence type="ECO:0000255" key="1">
    <source>
        <dbReference type="HAMAP-Rule" id="MF_00061"/>
    </source>
</evidence>
<gene>
    <name evidence="1" type="primary">ispE</name>
    <name type="ordered locus">CTL0173</name>
</gene>
<keyword id="KW-0067">ATP-binding</keyword>
<keyword id="KW-0414">Isoprene biosynthesis</keyword>
<keyword id="KW-0418">Kinase</keyword>
<keyword id="KW-0547">Nucleotide-binding</keyword>
<keyword id="KW-0808">Transferase</keyword>